<gene>
    <name evidence="1" type="primary">rdgC</name>
    <name type="ordered locus">ECDH10B_0350</name>
</gene>
<reference key="1">
    <citation type="journal article" date="2008" name="J. Bacteriol.">
        <title>The complete genome sequence of Escherichia coli DH10B: insights into the biology of a laboratory workhorse.</title>
        <authorList>
            <person name="Durfee T."/>
            <person name="Nelson R."/>
            <person name="Baldwin S."/>
            <person name="Plunkett G. III"/>
            <person name="Burland V."/>
            <person name="Mau B."/>
            <person name="Petrosino J.F."/>
            <person name="Qin X."/>
            <person name="Muzny D.M."/>
            <person name="Ayele M."/>
            <person name="Gibbs R.A."/>
            <person name="Csorgo B."/>
            <person name="Posfai G."/>
            <person name="Weinstock G.M."/>
            <person name="Blattner F.R."/>
        </authorList>
    </citation>
    <scope>NUCLEOTIDE SEQUENCE [LARGE SCALE GENOMIC DNA]</scope>
    <source>
        <strain>K12 / DH10B</strain>
    </source>
</reference>
<keyword id="KW-0963">Cytoplasm</keyword>
<keyword id="KW-0233">DNA recombination</keyword>
<name>RDGC_ECODH</name>
<comment type="function">
    <text evidence="1">May be involved in recombination.</text>
</comment>
<comment type="subcellular location">
    <subcellularLocation>
        <location evidence="1">Cytoplasm</location>
        <location evidence="1">Nucleoid</location>
    </subcellularLocation>
</comment>
<comment type="similarity">
    <text evidence="1">Belongs to the RdgC family.</text>
</comment>
<feature type="chain" id="PRO_1000099061" description="Recombination-associated protein RdgC">
    <location>
        <begin position="1"/>
        <end position="303"/>
    </location>
</feature>
<proteinExistence type="inferred from homology"/>
<organism>
    <name type="scientific">Escherichia coli (strain K12 / DH10B)</name>
    <dbReference type="NCBI Taxonomy" id="316385"/>
    <lineage>
        <taxon>Bacteria</taxon>
        <taxon>Pseudomonadati</taxon>
        <taxon>Pseudomonadota</taxon>
        <taxon>Gammaproteobacteria</taxon>
        <taxon>Enterobacterales</taxon>
        <taxon>Enterobacteriaceae</taxon>
        <taxon>Escherichia</taxon>
    </lineage>
</organism>
<evidence type="ECO:0000255" key="1">
    <source>
        <dbReference type="HAMAP-Rule" id="MF_00194"/>
    </source>
</evidence>
<protein>
    <recommendedName>
        <fullName evidence="1">Recombination-associated protein RdgC</fullName>
    </recommendedName>
</protein>
<sequence length="303" mass="33993">MLWFKNLMVYRLSREISLRAEEMEKQLASMAFTPCGSQDMAKMGWVPPMGSHSDALTHVANGQIVICARKEEKILPSPVIKQALEAKIAKLEAEQARKLKKTEKDSLKDEVLHSLLPRAFSRFSQTMMWIDTVNGLIMVDCASAKKAEDTLALLRKSLGSLPVVPLSMENPIELTLTEWVRSGSAAQGFQLLDEAELKSLLEDGGVIRAKKQDLTSEEITNHIEAGKVVTKLALDWQQRIQFVMCDDGSLKRLKFCDELRDQNEDIDREDFAQRFDADFILMTGELAALIQNLIEGLGGEAQR</sequence>
<accession>B1XEY2</accession>
<dbReference type="EMBL" id="CP000948">
    <property type="protein sequence ID" value="ACB01522.1"/>
    <property type="molecule type" value="Genomic_DNA"/>
</dbReference>
<dbReference type="RefSeq" id="WP_001298537.1">
    <property type="nucleotide sequence ID" value="NC_010473.1"/>
</dbReference>
<dbReference type="SMR" id="B1XEY2"/>
<dbReference type="GeneID" id="75202816"/>
<dbReference type="KEGG" id="ecd:ECDH10B_0350"/>
<dbReference type="HOGENOM" id="CLU_052038_1_1_6"/>
<dbReference type="GO" id="GO:0043590">
    <property type="term" value="C:bacterial nucleoid"/>
    <property type="evidence" value="ECO:0007669"/>
    <property type="project" value="TreeGrafter"/>
</dbReference>
<dbReference type="GO" id="GO:0005737">
    <property type="term" value="C:cytoplasm"/>
    <property type="evidence" value="ECO:0007669"/>
    <property type="project" value="UniProtKB-UniRule"/>
</dbReference>
<dbReference type="GO" id="GO:0003690">
    <property type="term" value="F:double-stranded DNA binding"/>
    <property type="evidence" value="ECO:0007669"/>
    <property type="project" value="TreeGrafter"/>
</dbReference>
<dbReference type="GO" id="GO:0006310">
    <property type="term" value="P:DNA recombination"/>
    <property type="evidence" value="ECO:0007669"/>
    <property type="project" value="UniProtKB-UniRule"/>
</dbReference>
<dbReference type="GO" id="GO:0000018">
    <property type="term" value="P:regulation of DNA recombination"/>
    <property type="evidence" value="ECO:0007669"/>
    <property type="project" value="TreeGrafter"/>
</dbReference>
<dbReference type="HAMAP" id="MF_00194">
    <property type="entry name" value="RdgC"/>
    <property type="match status" value="1"/>
</dbReference>
<dbReference type="InterPro" id="IPR007476">
    <property type="entry name" value="RdgC"/>
</dbReference>
<dbReference type="NCBIfam" id="NF001460">
    <property type="entry name" value="PRK00321.1-1"/>
    <property type="match status" value="1"/>
</dbReference>
<dbReference type="NCBIfam" id="NF001462">
    <property type="entry name" value="PRK00321.1-3"/>
    <property type="match status" value="1"/>
</dbReference>
<dbReference type="NCBIfam" id="NF001464">
    <property type="entry name" value="PRK00321.1-5"/>
    <property type="match status" value="1"/>
</dbReference>
<dbReference type="PANTHER" id="PTHR38103">
    <property type="entry name" value="RECOMBINATION-ASSOCIATED PROTEIN RDGC"/>
    <property type="match status" value="1"/>
</dbReference>
<dbReference type="PANTHER" id="PTHR38103:SF1">
    <property type="entry name" value="RECOMBINATION-ASSOCIATED PROTEIN RDGC"/>
    <property type="match status" value="1"/>
</dbReference>
<dbReference type="Pfam" id="PF04381">
    <property type="entry name" value="RdgC"/>
    <property type="match status" value="1"/>
</dbReference>